<protein>
    <recommendedName>
        <fullName>Retinoic acid receptor alpha</fullName>
        <shortName>RAR-alpha</shortName>
    </recommendedName>
    <alternativeName>
        <fullName>Nuclear receptor subfamily 1 group B member 1</fullName>
    </alternativeName>
</protein>
<reference key="1">
    <citation type="journal article" date="1999" name="Gene">
        <title>Isolation and characterization of the retinoic acid receptor-alpha gene in the Japanese pufferfish, F. rubripes.</title>
        <authorList>
            <person name="Wentworth J.M."/>
            <person name="Schoenfeld V."/>
            <person name="Meek S."/>
            <person name="Elgar G."/>
            <person name="Brenner S."/>
            <person name="Chatterjee K.K."/>
        </authorList>
    </citation>
    <scope>NUCLEOTIDE SEQUENCE [GENOMIC DNA / MRNA] (ISOFORMS ALPHA-1 AND ALPHA-2)</scope>
</reference>
<evidence type="ECO:0000250" key="1"/>
<evidence type="ECO:0000250" key="2">
    <source>
        <dbReference type="UniProtKB" id="P10276"/>
    </source>
</evidence>
<evidence type="ECO:0000255" key="3">
    <source>
        <dbReference type="PROSITE-ProRule" id="PRU00407"/>
    </source>
</evidence>
<evidence type="ECO:0000255" key="4">
    <source>
        <dbReference type="PROSITE-ProRule" id="PRU01189"/>
    </source>
</evidence>
<evidence type="ECO:0000256" key="5">
    <source>
        <dbReference type="SAM" id="MobiDB-lite"/>
    </source>
</evidence>
<evidence type="ECO:0000303" key="6">
    <source>
    </source>
</evidence>
<evidence type="ECO:0000305" key="7"/>
<sequence>MAGKGNPVPGPHLNGFPVPTYSYFFPHMLGSLSPPALPGLPISGYSTPSPATIETQSTSSEEIVPSPPSPPPPPRVYKPCFVCQDKSSGYHYGVSACEGCKGFFRRSIQKNMVYTCHREKNCIINKVTRNRCQYCRLQKCLEVGMSKESVRNDRNKKKKDEKKPECIENYVLSPDTEQMINRVRKAHQETFPSLCQLGKYTTTNSSERRVALDVDLWDKFSELSTKCIIKTVEFAKQLPGFVTLTIADQITLLKAACLDILILRICTRYTPEQDTMTFSDGLTLNRTQMHNAGFGPLTDLVFAFANQLLPLEMDDAETGLLSAICLLCGDRQDLEQAEKVDILQEPLLEALKIYVRRRRPHKPHMFPKMLMKITDLRSISAKGAERVITLKMEIPGSMPPLIQEMLENSEGLESGATGSRPSGAPPGSCSPSLSPSSAQSSPPTQSP</sequence>
<organism>
    <name type="scientific">Takifugu rubripes</name>
    <name type="common">Japanese pufferfish</name>
    <name type="synonym">Fugu rubripes</name>
    <dbReference type="NCBI Taxonomy" id="31033"/>
    <lineage>
        <taxon>Eukaryota</taxon>
        <taxon>Metazoa</taxon>
        <taxon>Chordata</taxon>
        <taxon>Craniata</taxon>
        <taxon>Vertebrata</taxon>
        <taxon>Euteleostomi</taxon>
        <taxon>Actinopterygii</taxon>
        <taxon>Neopterygii</taxon>
        <taxon>Teleostei</taxon>
        <taxon>Neoteleostei</taxon>
        <taxon>Acanthomorphata</taxon>
        <taxon>Eupercaria</taxon>
        <taxon>Tetraodontiformes</taxon>
        <taxon>Tetradontoidea</taxon>
        <taxon>Tetraodontidae</taxon>
        <taxon>Takifugu</taxon>
    </lineage>
</organism>
<feature type="chain" id="PRO_0000053464" description="Retinoic acid receptor alpha">
    <location>
        <begin position="1"/>
        <end position="447"/>
    </location>
</feature>
<feature type="domain" description="NR LBD" evidence="4">
    <location>
        <begin position="175"/>
        <end position="409"/>
    </location>
</feature>
<feature type="DNA-binding region" description="Nuclear receptor" evidence="3">
    <location>
        <begin position="80"/>
        <end position="145"/>
    </location>
</feature>
<feature type="zinc finger region" description="NR C4-type" evidence="3">
    <location>
        <begin position="80"/>
        <end position="100"/>
    </location>
</feature>
<feature type="zinc finger region" description="NR C4-type" evidence="3">
    <location>
        <begin position="116"/>
        <end position="140"/>
    </location>
</feature>
<feature type="region of interest" description="Modulating">
    <location>
        <begin position="1"/>
        <end position="79"/>
    </location>
</feature>
<feature type="region of interest" description="Disordered" evidence="5">
    <location>
        <begin position="47"/>
        <end position="72"/>
    </location>
</feature>
<feature type="region of interest" description="Hinge">
    <location>
        <begin position="146"/>
        <end position="174"/>
    </location>
</feature>
<feature type="region of interest" description="Disordered" evidence="5">
    <location>
        <begin position="407"/>
        <end position="447"/>
    </location>
</feature>
<feature type="short sequence motif" description="9aaTAD" evidence="2">
    <location>
        <begin position="400"/>
        <end position="408"/>
    </location>
</feature>
<feature type="compositionally biased region" description="Polar residues" evidence="5">
    <location>
        <begin position="47"/>
        <end position="61"/>
    </location>
</feature>
<feature type="compositionally biased region" description="Low complexity" evidence="5">
    <location>
        <begin position="414"/>
        <end position="447"/>
    </location>
</feature>
<feature type="splice variant" id="VSP_003632" description="In isoform Alpha-2." evidence="6">
    <original>MAGKGNPVPGPHLNGFPVPTYSYFFPHMLGSLSPPALPGLPISGYSTPSPAT</original>
    <variation>MYESVDVVGLNPSPNPFLMMEYYNQSRGCLIPEKGLVPGAPHPYSTSIRNQHWNGSNHS</variation>
    <location>
        <begin position="1"/>
        <end position="52"/>
    </location>
</feature>
<gene>
    <name type="primary">rara</name>
    <name type="synonym">nr1b1</name>
</gene>
<name>RARA_TAKRU</name>
<keyword id="KW-0025">Alternative splicing</keyword>
<keyword id="KW-0238">DNA-binding</keyword>
<keyword id="KW-0479">Metal-binding</keyword>
<keyword id="KW-0539">Nucleus</keyword>
<keyword id="KW-0675">Receptor</keyword>
<keyword id="KW-1185">Reference proteome</keyword>
<keyword id="KW-0804">Transcription</keyword>
<keyword id="KW-0805">Transcription regulation</keyword>
<keyword id="KW-0862">Zinc</keyword>
<keyword id="KW-0863">Zinc-finger</keyword>
<comment type="function">
    <text evidence="1">Receptor for retinoic acid. Retinoic acid receptors bind as heterodimers to their target response elements in response to their ligands, all-trans or 9-cis retinoic acid, and regulate gene expression in various biological processes. The rar/rxr heterodimers bind to the retinoic acid response elements (RARE) composed of tandem 5'-AGGTCA-3' sites known as DR1-DR5 (By similarity).</text>
</comment>
<comment type="subunit">
    <text evidence="1">Heterodimer; with an rxr molecule. Binds DNA preferentially as a rar/rxr heterodimer.</text>
</comment>
<comment type="subcellular location">
    <subcellularLocation>
        <location evidence="3">Nucleus</location>
    </subcellularLocation>
</comment>
<comment type="alternative products">
    <event type="alternative splicing"/>
    <isoform>
        <id>Q9W5Z3-1</id>
        <name>Alpha-1</name>
        <sequence type="displayed"/>
    </isoform>
    <isoform>
        <id>Q9W5Z3-2</id>
        <name>Alpha-2</name>
        <sequence type="described" ref="VSP_003632"/>
    </isoform>
</comment>
<comment type="domain">
    <text>Composed of three domains: a modulating N-terminal domain, a DNA-binding domain and a C-terminal ligand-binding domain.</text>
</comment>
<comment type="domain">
    <text evidence="2">The 9aaTAD motif is a transactivation domain present in a large number of yeast and animal transcription factors.</text>
</comment>
<comment type="similarity">
    <text evidence="7">Belongs to the nuclear hormone receptor family. NR1 subfamily.</text>
</comment>
<accession>Q9W5Z3</accession>
<accession>Q9W5Z4</accession>
<proteinExistence type="evidence at transcript level"/>
<dbReference type="EMBL" id="AJ012382">
    <property type="protein sequence ID" value="CAB96754.1"/>
    <property type="molecule type" value="Genomic_DNA"/>
</dbReference>
<dbReference type="EMBL" id="AJ012380">
    <property type="protein sequence ID" value="CAB96754.1"/>
    <property type="status" value="JOINED"/>
    <property type="molecule type" value="Genomic_DNA"/>
</dbReference>
<dbReference type="EMBL" id="AJ012381">
    <property type="protein sequence ID" value="CAB43979.1"/>
    <property type="molecule type" value="Genomic_DNA"/>
</dbReference>
<dbReference type="EMBL" id="AJ012380">
    <property type="protein sequence ID" value="CAB43979.1"/>
    <property type="status" value="JOINED"/>
    <property type="molecule type" value="Genomic_DNA"/>
</dbReference>
<dbReference type="EMBL" id="AJ012378">
    <property type="protein sequence ID" value="CAB43870.1"/>
    <property type="molecule type" value="mRNA"/>
</dbReference>
<dbReference type="EMBL" id="AJ012379">
    <property type="protein sequence ID" value="CAB43871.1"/>
    <property type="molecule type" value="mRNA"/>
</dbReference>
<dbReference type="RefSeq" id="NP_001027925.1">
    <molecule id="Q9W5Z3-2"/>
    <property type="nucleotide sequence ID" value="NM_001032753.1"/>
</dbReference>
<dbReference type="RefSeq" id="XP_029682195.1">
    <molecule id="Q9W5Z3-1"/>
    <property type="nucleotide sequence ID" value="XM_029826335.1"/>
</dbReference>
<dbReference type="SMR" id="Q9W5Z3"/>
<dbReference type="FunCoup" id="Q9W5Z3">
    <property type="interactions" value="864"/>
</dbReference>
<dbReference type="STRING" id="31033.ENSTRUP00000041965"/>
<dbReference type="Ensembl" id="ENSTRUT00000042107.3">
    <molecule id="Q9W5Z3-1"/>
    <property type="protein sequence ID" value="ENSTRUP00000041963.2"/>
    <property type="gene ID" value="ENSTRUG00000016415.3"/>
</dbReference>
<dbReference type="GeneID" id="445948"/>
<dbReference type="KEGG" id="tru:445948"/>
<dbReference type="CTD" id="30680"/>
<dbReference type="eggNOG" id="KOG3575">
    <property type="taxonomic scope" value="Eukaryota"/>
</dbReference>
<dbReference type="GeneTree" id="ENSGT00940000165576"/>
<dbReference type="InParanoid" id="Q9W5Z3"/>
<dbReference type="OMA" id="CHTRAPT"/>
<dbReference type="OrthoDB" id="6081310at2759"/>
<dbReference type="Proteomes" id="UP000005226">
    <property type="component" value="Chromosome 1"/>
</dbReference>
<dbReference type="GO" id="GO:0005634">
    <property type="term" value="C:nucleus"/>
    <property type="evidence" value="ECO:0007669"/>
    <property type="project" value="UniProtKB-SubCell"/>
</dbReference>
<dbReference type="GO" id="GO:0005667">
    <property type="term" value="C:transcription regulator complex"/>
    <property type="evidence" value="ECO:0007669"/>
    <property type="project" value="TreeGrafter"/>
</dbReference>
<dbReference type="GO" id="GO:0035259">
    <property type="term" value="F:nuclear glucocorticoid receptor binding"/>
    <property type="evidence" value="ECO:0007669"/>
    <property type="project" value="TreeGrafter"/>
</dbReference>
<dbReference type="GO" id="GO:0004879">
    <property type="term" value="F:nuclear receptor activity"/>
    <property type="evidence" value="ECO:0007669"/>
    <property type="project" value="InterPro"/>
</dbReference>
<dbReference type="GO" id="GO:0000978">
    <property type="term" value="F:RNA polymerase II cis-regulatory region sequence-specific DNA binding"/>
    <property type="evidence" value="ECO:0007669"/>
    <property type="project" value="TreeGrafter"/>
</dbReference>
<dbReference type="GO" id="GO:0008270">
    <property type="term" value="F:zinc ion binding"/>
    <property type="evidence" value="ECO:0007669"/>
    <property type="project" value="UniProtKB-KW"/>
</dbReference>
<dbReference type="GO" id="GO:0071376">
    <property type="term" value="P:cellular response to corticotropin-releasing hormone stimulus"/>
    <property type="evidence" value="ECO:0007669"/>
    <property type="project" value="TreeGrafter"/>
</dbReference>
<dbReference type="GO" id="GO:0048384">
    <property type="term" value="P:retinoic acid receptor signaling pathway"/>
    <property type="evidence" value="ECO:0007669"/>
    <property type="project" value="InterPro"/>
</dbReference>
<dbReference type="CDD" id="cd06964">
    <property type="entry name" value="NR_DBD_RAR"/>
    <property type="match status" value="1"/>
</dbReference>
<dbReference type="CDD" id="cd06937">
    <property type="entry name" value="NR_LBD_RAR"/>
    <property type="match status" value="1"/>
</dbReference>
<dbReference type="FunFam" id="1.10.565.10:FF:000001">
    <property type="entry name" value="Retinoic acid receptor beta isoform"/>
    <property type="match status" value="1"/>
</dbReference>
<dbReference type="FunFam" id="3.30.50.10:FF:000004">
    <property type="entry name" value="Retinoic acid receptor beta isoform"/>
    <property type="match status" value="1"/>
</dbReference>
<dbReference type="Gene3D" id="3.30.50.10">
    <property type="entry name" value="Erythroid Transcription Factor GATA-1, subunit A"/>
    <property type="match status" value="1"/>
</dbReference>
<dbReference type="Gene3D" id="1.10.565.10">
    <property type="entry name" value="Retinoid X Receptor"/>
    <property type="match status" value="1"/>
</dbReference>
<dbReference type="InterPro" id="IPR035500">
    <property type="entry name" value="NHR-like_dom_sf"/>
</dbReference>
<dbReference type="InterPro" id="IPR047159">
    <property type="entry name" value="NR_DBD_RAR"/>
</dbReference>
<dbReference type="InterPro" id="IPR047158">
    <property type="entry name" value="NR_LBD_RAR"/>
</dbReference>
<dbReference type="InterPro" id="IPR000536">
    <property type="entry name" value="Nucl_hrmn_rcpt_lig-bd"/>
</dbReference>
<dbReference type="InterPro" id="IPR001723">
    <property type="entry name" value="Nuclear_hrmn_rcpt"/>
</dbReference>
<dbReference type="InterPro" id="IPR003078">
    <property type="entry name" value="Retinoic_acid_rcpt"/>
</dbReference>
<dbReference type="InterPro" id="IPR001628">
    <property type="entry name" value="Znf_hrmn_rcpt"/>
</dbReference>
<dbReference type="InterPro" id="IPR013088">
    <property type="entry name" value="Znf_NHR/GATA"/>
</dbReference>
<dbReference type="PANTHER" id="PTHR24085">
    <property type="entry name" value="NUCLEAR HORMONE RECEPTOR"/>
    <property type="match status" value="1"/>
</dbReference>
<dbReference type="PANTHER" id="PTHR24085:SF8">
    <property type="entry name" value="RETINOIC ACID RECEPTOR ALPHA"/>
    <property type="match status" value="1"/>
</dbReference>
<dbReference type="Pfam" id="PF00104">
    <property type="entry name" value="Hormone_recep"/>
    <property type="match status" value="1"/>
</dbReference>
<dbReference type="Pfam" id="PF00105">
    <property type="entry name" value="zf-C4"/>
    <property type="match status" value="1"/>
</dbReference>
<dbReference type="PRINTS" id="PR01292">
    <property type="entry name" value="RETNOICACIDR"/>
</dbReference>
<dbReference type="PRINTS" id="PR00398">
    <property type="entry name" value="STRDHORMONER"/>
</dbReference>
<dbReference type="PRINTS" id="PR00047">
    <property type="entry name" value="STROIDFINGER"/>
</dbReference>
<dbReference type="SMART" id="SM00430">
    <property type="entry name" value="HOLI"/>
    <property type="match status" value="1"/>
</dbReference>
<dbReference type="SMART" id="SM00399">
    <property type="entry name" value="ZnF_C4"/>
    <property type="match status" value="1"/>
</dbReference>
<dbReference type="SUPFAM" id="SSF57716">
    <property type="entry name" value="Glucocorticoid receptor-like (DNA-binding domain)"/>
    <property type="match status" value="1"/>
</dbReference>
<dbReference type="SUPFAM" id="SSF48508">
    <property type="entry name" value="Nuclear receptor ligand-binding domain"/>
    <property type="match status" value="1"/>
</dbReference>
<dbReference type="PROSITE" id="PS51843">
    <property type="entry name" value="NR_LBD"/>
    <property type="match status" value="1"/>
</dbReference>
<dbReference type="PROSITE" id="PS00031">
    <property type="entry name" value="NUCLEAR_REC_DBD_1"/>
    <property type="match status" value="1"/>
</dbReference>
<dbReference type="PROSITE" id="PS51030">
    <property type="entry name" value="NUCLEAR_REC_DBD_2"/>
    <property type="match status" value="1"/>
</dbReference>